<evidence type="ECO:0000255" key="1">
    <source>
        <dbReference type="HAMAP-Rule" id="MF_00191"/>
    </source>
</evidence>
<proteinExistence type="inferred from homology"/>
<feature type="chain" id="PRO_1000021167" description="4-hydroxy-3-methylbut-2-enyl diphosphate reductase">
    <location>
        <begin position="1"/>
        <end position="318"/>
    </location>
</feature>
<feature type="active site" description="Proton donor" evidence="1">
    <location>
        <position position="126"/>
    </location>
</feature>
<feature type="binding site" evidence="1">
    <location>
        <position position="12"/>
    </location>
    <ligand>
        <name>[4Fe-4S] cluster</name>
        <dbReference type="ChEBI" id="CHEBI:49883"/>
    </ligand>
</feature>
<feature type="binding site" evidence="1">
    <location>
        <position position="41"/>
    </location>
    <ligand>
        <name>(2E)-4-hydroxy-3-methylbut-2-enyl diphosphate</name>
        <dbReference type="ChEBI" id="CHEBI:128753"/>
    </ligand>
</feature>
<feature type="binding site" evidence="1">
    <location>
        <position position="41"/>
    </location>
    <ligand>
        <name>dimethylallyl diphosphate</name>
        <dbReference type="ChEBI" id="CHEBI:57623"/>
    </ligand>
</feature>
<feature type="binding site" evidence="1">
    <location>
        <position position="41"/>
    </location>
    <ligand>
        <name>isopentenyl diphosphate</name>
        <dbReference type="ChEBI" id="CHEBI:128769"/>
    </ligand>
</feature>
<feature type="binding site" evidence="1">
    <location>
        <position position="74"/>
    </location>
    <ligand>
        <name>(2E)-4-hydroxy-3-methylbut-2-enyl diphosphate</name>
        <dbReference type="ChEBI" id="CHEBI:128753"/>
    </ligand>
</feature>
<feature type="binding site" evidence="1">
    <location>
        <position position="74"/>
    </location>
    <ligand>
        <name>dimethylallyl diphosphate</name>
        <dbReference type="ChEBI" id="CHEBI:57623"/>
    </ligand>
</feature>
<feature type="binding site" evidence="1">
    <location>
        <position position="74"/>
    </location>
    <ligand>
        <name>isopentenyl diphosphate</name>
        <dbReference type="ChEBI" id="CHEBI:128769"/>
    </ligand>
</feature>
<feature type="binding site" evidence="1">
    <location>
        <position position="96"/>
    </location>
    <ligand>
        <name>[4Fe-4S] cluster</name>
        <dbReference type="ChEBI" id="CHEBI:49883"/>
    </ligand>
</feature>
<feature type="binding site" evidence="1">
    <location>
        <position position="124"/>
    </location>
    <ligand>
        <name>(2E)-4-hydroxy-3-methylbut-2-enyl diphosphate</name>
        <dbReference type="ChEBI" id="CHEBI:128753"/>
    </ligand>
</feature>
<feature type="binding site" evidence="1">
    <location>
        <position position="124"/>
    </location>
    <ligand>
        <name>dimethylallyl diphosphate</name>
        <dbReference type="ChEBI" id="CHEBI:57623"/>
    </ligand>
</feature>
<feature type="binding site" evidence="1">
    <location>
        <position position="124"/>
    </location>
    <ligand>
        <name>isopentenyl diphosphate</name>
        <dbReference type="ChEBI" id="CHEBI:128769"/>
    </ligand>
</feature>
<feature type="binding site" evidence="1">
    <location>
        <position position="168"/>
    </location>
    <ligand>
        <name>(2E)-4-hydroxy-3-methylbut-2-enyl diphosphate</name>
        <dbReference type="ChEBI" id="CHEBI:128753"/>
    </ligand>
</feature>
<feature type="binding site" evidence="1">
    <location>
        <position position="198"/>
    </location>
    <ligand>
        <name>[4Fe-4S] cluster</name>
        <dbReference type="ChEBI" id="CHEBI:49883"/>
    </ligand>
</feature>
<feature type="binding site" evidence="1">
    <location>
        <position position="226"/>
    </location>
    <ligand>
        <name>(2E)-4-hydroxy-3-methylbut-2-enyl diphosphate</name>
        <dbReference type="ChEBI" id="CHEBI:128753"/>
    </ligand>
</feature>
<feature type="binding site" evidence="1">
    <location>
        <position position="226"/>
    </location>
    <ligand>
        <name>dimethylallyl diphosphate</name>
        <dbReference type="ChEBI" id="CHEBI:57623"/>
    </ligand>
</feature>
<feature type="binding site" evidence="1">
    <location>
        <position position="226"/>
    </location>
    <ligand>
        <name>isopentenyl diphosphate</name>
        <dbReference type="ChEBI" id="CHEBI:128769"/>
    </ligand>
</feature>
<feature type="binding site" evidence="1">
    <location>
        <position position="227"/>
    </location>
    <ligand>
        <name>(2E)-4-hydroxy-3-methylbut-2-enyl diphosphate</name>
        <dbReference type="ChEBI" id="CHEBI:128753"/>
    </ligand>
</feature>
<feature type="binding site" evidence="1">
    <location>
        <position position="227"/>
    </location>
    <ligand>
        <name>dimethylallyl diphosphate</name>
        <dbReference type="ChEBI" id="CHEBI:57623"/>
    </ligand>
</feature>
<feature type="binding site" evidence="1">
    <location>
        <position position="227"/>
    </location>
    <ligand>
        <name>isopentenyl diphosphate</name>
        <dbReference type="ChEBI" id="CHEBI:128769"/>
    </ligand>
</feature>
<feature type="binding site" evidence="1">
    <location>
        <position position="228"/>
    </location>
    <ligand>
        <name>(2E)-4-hydroxy-3-methylbut-2-enyl diphosphate</name>
        <dbReference type="ChEBI" id="CHEBI:128753"/>
    </ligand>
</feature>
<feature type="binding site" evidence="1">
    <location>
        <position position="228"/>
    </location>
    <ligand>
        <name>dimethylallyl diphosphate</name>
        <dbReference type="ChEBI" id="CHEBI:57623"/>
    </ligand>
</feature>
<feature type="binding site" evidence="1">
    <location>
        <position position="228"/>
    </location>
    <ligand>
        <name>isopentenyl diphosphate</name>
        <dbReference type="ChEBI" id="CHEBI:128769"/>
    </ligand>
</feature>
<feature type="binding site" evidence="1">
    <location>
        <position position="270"/>
    </location>
    <ligand>
        <name>(2E)-4-hydroxy-3-methylbut-2-enyl diphosphate</name>
        <dbReference type="ChEBI" id="CHEBI:128753"/>
    </ligand>
</feature>
<feature type="binding site" evidence="1">
    <location>
        <position position="270"/>
    </location>
    <ligand>
        <name>dimethylallyl diphosphate</name>
        <dbReference type="ChEBI" id="CHEBI:57623"/>
    </ligand>
</feature>
<feature type="binding site" evidence="1">
    <location>
        <position position="270"/>
    </location>
    <ligand>
        <name>isopentenyl diphosphate</name>
        <dbReference type="ChEBI" id="CHEBI:128769"/>
    </ligand>
</feature>
<organism>
    <name type="scientific">Psychrobacter arcticus (strain DSM 17307 / VKM B-2377 / 273-4)</name>
    <dbReference type="NCBI Taxonomy" id="259536"/>
    <lineage>
        <taxon>Bacteria</taxon>
        <taxon>Pseudomonadati</taxon>
        <taxon>Pseudomonadota</taxon>
        <taxon>Gammaproteobacteria</taxon>
        <taxon>Moraxellales</taxon>
        <taxon>Moraxellaceae</taxon>
        <taxon>Psychrobacter</taxon>
    </lineage>
</organism>
<gene>
    <name evidence="1" type="primary">ispH</name>
    <name type="ordered locus">Psyc_1722</name>
</gene>
<protein>
    <recommendedName>
        <fullName evidence="1">4-hydroxy-3-methylbut-2-enyl diphosphate reductase</fullName>
        <shortName evidence="1">HMBPP reductase</shortName>
        <ecNumber evidence="1">1.17.7.4</ecNumber>
    </recommendedName>
</protein>
<dbReference type="EC" id="1.17.7.4" evidence="1"/>
<dbReference type="EMBL" id="CP000082">
    <property type="protein sequence ID" value="AAZ19570.1"/>
    <property type="molecule type" value="Genomic_DNA"/>
</dbReference>
<dbReference type="RefSeq" id="WP_011280983.1">
    <property type="nucleotide sequence ID" value="NC_007204.1"/>
</dbReference>
<dbReference type="SMR" id="Q4FQY8"/>
<dbReference type="STRING" id="259536.Psyc_1722"/>
<dbReference type="KEGG" id="par:Psyc_1722"/>
<dbReference type="eggNOG" id="COG0761">
    <property type="taxonomic scope" value="Bacteria"/>
</dbReference>
<dbReference type="HOGENOM" id="CLU_027486_1_0_6"/>
<dbReference type="OrthoDB" id="9804068at2"/>
<dbReference type="UniPathway" id="UPA00056">
    <property type="reaction ID" value="UER00097"/>
</dbReference>
<dbReference type="UniPathway" id="UPA00059">
    <property type="reaction ID" value="UER00105"/>
</dbReference>
<dbReference type="Proteomes" id="UP000000546">
    <property type="component" value="Chromosome"/>
</dbReference>
<dbReference type="GO" id="GO:0051539">
    <property type="term" value="F:4 iron, 4 sulfur cluster binding"/>
    <property type="evidence" value="ECO:0007669"/>
    <property type="project" value="UniProtKB-UniRule"/>
</dbReference>
<dbReference type="GO" id="GO:0051745">
    <property type="term" value="F:4-hydroxy-3-methylbut-2-enyl diphosphate reductase activity"/>
    <property type="evidence" value="ECO:0007669"/>
    <property type="project" value="UniProtKB-UniRule"/>
</dbReference>
<dbReference type="GO" id="GO:0046872">
    <property type="term" value="F:metal ion binding"/>
    <property type="evidence" value="ECO:0007669"/>
    <property type="project" value="UniProtKB-KW"/>
</dbReference>
<dbReference type="GO" id="GO:0050992">
    <property type="term" value="P:dimethylallyl diphosphate biosynthetic process"/>
    <property type="evidence" value="ECO:0007669"/>
    <property type="project" value="UniProtKB-UniRule"/>
</dbReference>
<dbReference type="GO" id="GO:0019288">
    <property type="term" value="P:isopentenyl diphosphate biosynthetic process, methylerythritol 4-phosphate pathway"/>
    <property type="evidence" value="ECO:0007669"/>
    <property type="project" value="UniProtKB-UniRule"/>
</dbReference>
<dbReference type="GO" id="GO:0016114">
    <property type="term" value="P:terpenoid biosynthetic process"/>
    <property type="evidence" value="ECO:0007669"/>
    <property type="project" value="UniProtKB-UniRule"/>
</dbReference>
<dbReference type="CDD" id="cd13944">
    <property type="entry name" value="lytB_ispH"/>
    <property type="match status" value="1"/>
</dbReference>
<dbReference type="Gene3D" id="3.40.50.11270">
    <property type="match status" value="1"/>
</dbReference>
<dbReference type="Gene3D" id="3.40.1010.20">
    <property type="entry name" value="4-hydroxy-3-methylbut-2-enyl diphosphate reductase, catalytic domain"/>
    <property type="match status" value="2"/>
</dbReference>
<dbReference type="HAMAP" id="MF_00191">
    <property type="entry name" value="IspH"/>
    <property type="match status" value="1"/>
</dbReference>
<dbReference type="InterPro" id="IPR003451">
    <property type="entry name" value="LytB/IspH"/>
</dbReference>
<dbReference type="NCBIfam" id="TIGR00216">
    <property type="entry name" value="ispH_lytB"/>
    <property type="match status" value="1"/>
</dbReference>
<dbReference type="NCBIfam" id="NF002188">
    <property type="entry name" value="PRK01045.1-2"/>
    <property type="match status" value="1"/>
</dbReference>
<dbReference type="NCBIfam" id="NF002190">
    <property type="entry name" value="PRK01045.1-4"/>
    <property type="match status" value="1"/>
</dbReference>
<dbReference type="PANTHER" id="PTHR30426">
    <property type="entry name" value="4-HYDROXY-3-METHYLBUT-2-ENYL DIPHOSPHATE REDUCTASE"/>
    <property type="match status" value="1"/>
</dbReference>
<dbReference type="PANTHER" id="PTHR30426:SF0">
    <property type="entry name" value="4-HYDROXY-3-METHYLBUT-2-ENYL DIPHOSPHATE REDUCTASE"/>
    <property type="match status" value="1"/>
</dbReference>
<dbReference type="Pfam" id="PF02401">
    <property type="entry name" value="LYTB"/>
    <property type="match status" value="1"/>
</dbReference>
<comment type="function">
    <text evidence="1">Catalyzes the conversion of 1-hydroxy-2-methyl-2-(E)-butenyl 4-diphosphate (HMBPP) into a mixture of isopentenyl diphosphate (IPP) and dimethylallyl diphosphate (DMAPP). Acts in the terminal step of the DOXP/MEP pathway for isoprenoid precursor biosynthesis.</text>
</comment>
<comment type="catalytic activity">
    <reaction evidence="1">
        <text>isopentenyl diphosphate + 2 oxidized [2Fe-2S]-[ferredoxin] + H2O = (2E)-4-hydroxy-3-methylbut-2-enyl diphosphate + 2 reduced [2Fe-2S]-[ferredoxin] + 2 H(+)</text>
        <dbReference type="Rhea" id="RHEA:24488"/>
        <dbReference type="Rhea" id="RHEA-COMP:10000"/>
        <dbReference type="Rhea" id="RHEA-COMP:10001"/>
        <dbReference type="ChEBI" id="CHEBI:15377"/>
        <dbReference type="ChEBI" id="CHEBI:15378"/>
        <dbReference type="ChEBI" id="CHEBI:33737"/>
        <dbReference type="ChEBI" id="CHEBI:33738"/>
        <dbReference type="ChEBI" id="CHEBI:128753"/>
        <dbReference type="ChEBI" id="CHEBI:128769"/>
        <dbReference type="EC" id="1.17.7.4"/>
    </reaction>
</comment>
<comment type="catalytic activity">
    <reaction evidence="1">
        <text>dimethylallyl diphosphate + 2 oxidized [2Fe-2S]-[ferredoxin] + H2O = (2E)-4-hydroxy-3-methylbut-2-enyl diphosphate + 2 reduced [2Fe-2S]-[ferredoxin] + 2 H(+)</text>
        <dbReference type="Rhea" id="RHEA:24825"/>
        <dbReference type="Rhea" id="RHEA-COMP:10000"/>
        <dbReference type="Rhea" id="RHEA-COMP:10001"/>
        <dbReference type="ChEBI" id="CHEBI:15377"/>
        <dbReference type="ChEBI" id="CHEBI:15378"/>
        <dbReference type="ChEBI" id="CHEBI:33737"/>
        <dbReference type="ChEBI" id="CHEBI:33738"/>
        <dbReference type="ChEBI" id="CHEBI:57623"/>
        <dbReference type="ChEBI" id="CHEBI:128753"/>
        <dbReference type="EC" id="1.17.7.4"/>
    </reaction>
</comment>
<comment type="cofactor">
    <cofactor evidence="1">
        <name>[4Fe-4S] cluster</name>
        <dbReference type="ChEBI" id="CHEBI:49883"/>
    </cofactor>
    <text evidence="1">Binds 1 [4Fe-4S] cluster per subunit.</text>
</comment>
<comment type="pathway">
    <text evidence="1">Isoprenoid biosynthesis; dimethylallyl diphosphate biosynthesis; dimethylallyl diphosphate from (2E)-4-hydroxy-3-methylbutenyl diphosphate: step 1/1.</text>
</comment>
<comment type="pathway">
    <text evidence="1">Isoprenoid biosynthesis; isopentenyl diphosphate biosynthesis via DXP pathway; isopentenyl diphosphate from 1-deoxy-D-xylulose 5-phosphate: step 6/6.</text>
</comment>
<comment type="similarity">
    <text evidence="1">Belongs to the IspH family.</text>
</comment>
<sequence length="318" mass="35083">MQIYLANPRGFCAGVDRAIAIVNEALLRFEPPIYVRHEVVHNKFVVSDLANRGAVFVEELHEVPDGSIVIFSAHGVSKAVEDEAERRDLTVFDATCPLVTKVHIEVAKFAQDGMDAVLIGHAGHPEVEGTMGRFNHRHGGRIHLVENESDVEALSVQDAERLAFVTQTTLSMDDTARVIDALREKFPHIQGPRKDDICYATQNRQDAVKHLASRCEVVLVVGSPNSSNSNRLRELAERMNCRAYLIDNATEMDINWFDGIQSVGVTAGASAPEVLIQEVLQQLQDWGGDLPSELSGIEENVTFSLPKALRIPMTQVGK</sequence>
<keyword id="KW-0004">4Fe-4S</keyword>
<keyword id="KW-0408">Iron</keyword>
<keyword id="KW-0411">Iron-sulfur</keyword>
<keyword id="KW-0414">Isoprene biosynthesis</keyword>
<keyword id="KW-0479">Metal-binding</keyword>
<keyword id="KW-0560">Oxidoreductase</keyword>
<keyword id="KW-1185">Reference proteome</keyword>
<name>ISPH_PSYA2</name>
<reference key="1">
    <citation type="journal article" date="2010" name="Appl. Environ. Microbiol.">
        <title>The genome sequence of Psychrobacter arcticus 273-4, a psychroactive Siberian permafrost bacterium, reveals mechanisms for adaptation to low-temperature growth.</title>
        <authorList>
            <person name="Ayala-del-Rio H.L."/>
            <person name="Chain P.S."/>
            <person name="Grzymski J.J."/>
            <person name="Ponder M.A."/>
            <person name="Ivanova N."/>
            <person name="Bergholz P.W."/>
            <person name="Di Bartolo G."/>
            <person name="Hauser L."/>
            <person name="Land M."/>
            <person name="Bakermans C."/>
            <person name="Rodrigues D."/>
            <person name="Klappenbach J."/>
            <person name="Zarka D."/>
            <person name="Larimer F."/>
            <person name="Richardson P."/>
            <person name="Murray A."/>
            <person name="Thomashow M."/>
            <person name="Tiedje J.M."/>
        </authorList>
    </citation>
    <scope>NUCLEOTIDE SEQUENCE [LARGE SCALE GENOMIC DNA]</scope>
    <source>
        <strain>DSM 17307 / VKM B-2377 / 273-4</strain>
    </source>
</reference>
<accession>Q4FQY8</accession>